<reference key="1">
    <citation type="journal article" date="1993" name="Plant J.">
        <title>Isolation and characterization of a cDNA clone from Catharanthus roseus encoding NADPH:cytochrome P-450 reductase, an enzyme essential for reactions catalysed by cytochrome P-450 mono-oxygenases in plants.</title>
        <authorList>
            <person name="Meijer A.H."/>
            <person name="Lopes Cardoso M.I."/>
            <person name="Voskuilen J.T."/>
            <person name="de Waal A."/>
            <person name="Verpoorte R."/>
            <person name="Hoge J.H.C."/>
        </authorList>
    </citation>
    <scope>NUCLEOTIDE SEQUENCE [MRNA]</scope>
</reference>
<reference key="2">
    <citation type="submission" date="1996-11" db="EMBL/GenBank/DDBJ databases">
        <authorList>
            <person name="Lopes Cardoso M.T."/>
            <person name="Meijer A.H."/>
            <person name="Rueb S."/>
            <person name="Queiroz Machado J."/>
            <person name="Memelink J."/>
            <person name="Hoge J.H.C."/>
        </authorList>
    </citation>
    <scope>NUCLEOTIDE SEQUENCE [GENOMIC DNA] OF 1-11</scope>
    <source>
        <strain>cv. Morning mist</strain>
    </source>
</reference>
<gene>
    <name type="primary">CPR</name>
</gene>
<sequence length="714" mass="78958">MDSSSEKLSPFELMSAILKGAKLDGSNSSDSGVAVSPAVMAMLLENKELVMILTTSVAVLIGCVVVLIWRRSSGSGKKVVEPPKLIVPKSVVEPEEIDEGKKKFTIFFGTQTGTAEGFAKALAEEAKARYEKAVIKVIDIDDYAADDEEYEEKFRKETLAFFILATYGDGEPTDNAARFYKWFVEGNDRGDWLKNLQYGVFGLGNRQYEHFNKIAKVVDEKVAEQGGKRIVPLVLGDDDQCIEDDFAAWRENVWPELDNLLRDEDDTTVSTTYTAAIPEYRVVFPDKSDSLISEANGHANGYANGNTVYDAQHPCRSNVAVRKELHTPASDRSCTHLDFDIAGTGLSYGTGDHVGVYCDNLSETVEEAERLLNLPPETYFSLHADKEDGTPLAGSSLPPPFPPCTLRTALTRYADLLNTPKKSALLALAAYASDPNEADRLKYLASPAGKDEYAQSLVANQRSLLEVMAEFPSAKPPLGVFFAAIAPRLQPRFYSISSSPRMAPSRIHVTCALVYEKTPGGRIHKGVCSTWMKNAIPLEESRDCSWAPIFVRQSNFKLPADPKVPVIMIGPGTGLAPFRGFLQERLALKEEGAELGTAVFFFGCRNRKMDYIYEDELNHFLEIGALSELLVAFSREGPTKQYVQHKMAEKASDIWRMISDGAYVYVCGDAKGMARDVHRTLHTIAQEQGSMDSTQAEGFVKNLQMTGRYLRDVW</sequence>
<protein>
    <recommendedName>
        <fullName evidence="1">NADPH--cytochrome P450 reductase</fullName>
        <shortName evidence="1">CPR</shortName>
        <shortName evidence="1">P450R</shortName>
        <ecNumber evidence="1">1.6.2.4</ecNumber>
    </recommendedName>
</protein>
<keyword id="KW-0256">Endoplasmic reticulum</keyword>
<keyword id="KW-0274">FAD</keyword>
<keyword id="KW-0285">Flavoprotein</keyword>
<keyword id="KW-0288">FMN</keyword>
<keyword id="KW-0472">Membrane</keyword>
<keyword id="KW-0521">NADP</keyword>
<keyword id="KW-0560">Oxidoreductase</keyword>
<keyword id="KW-0812">Transmembrane</keyword>
<keyword id="KW-1133">Transmembrane helix</keyword>
<name>NCPR_CATRO</name>
<dbReference type="EC" id="1.6.2.4" evidence="1"/>
<dbReference type="EMBL" id="X69791">
    <property type="protein sequence ID" value="CAA49446.1"/>
    <property type="molecule type" value="mRNA"/>
</dbReference>
<dbReference type="EMBL" id="Y09417">
    <property type="protein sequence ID" value="CAA70571.1"/>
    <property type="molecule type" value="Genomic_DNA"/>
</dbReference>
<dbReference type="PIR" id="S31502">
    <property type="entry name" value="S31502"/>
</dbReference>
<dbReference type="SMR" id="Q05001"/>
<dbReference type="GO" id="GO:0005829">
    <property type="term" value="C:cytosol"/>
    <property type="evidence" value="ECO:0007669"/>
    <property type="project" value="TreeGrafter"/>
</dbReference>
<dbReference type="GO" id="GO:0005789">
    <property type="term" value="C:endoplasmic reticulum membrane"/>
    <property type="evidence" value="ECO:0007669"/>
    <property type="project" value="UniProtKB-SubCell"/>
</dbReference>
<dbReference type="GO" id="GO:0050660">
    <property type="term" value="F:flavin adenine dinucleotide binding"/>
    <property type="evidence" value="ECO:0007669"/>
    <property type="project" value="UniProtKB-UniRule"/>
</dbReference>
<dbReference type="GO" id="GO:0010181">
    <property type="term" value="F:FMN binding"/>
    <property type="evidence" value="ECO:0007669"/>
    <property type="project" value="UniProtKB-UniRule"/>
</dbReference>
<dbReference type="GO" id="GO:0050661">
    <property type="term" value="F:NADP binding"/>
    <property type="evidence" value="ECO:0007669"/>
    <property type="project" value="UniProtKB-UniRule"/>
</dbReference>
<dbReference type="GO" id="GO:0003958">
    <property type="term" value="F:NADPH-hemoprotein reductase activity"/>
    <property type="evidence" value="ECO:0007669"/>
    <property type="project" value="UniProtKB-UniRule"/>
</dbReference>
<dbReference type="CDD" id="cd06204">
    <property type="entry name" value="CYPOR"/>
    <property type="match status" value="1"/>
</dbReference>
<dbReference type="FunFam" id="1.20.990.10:FF:000003">
    <property type="entry name" value="NADPH--cytochrome P450 reductase"/>
    <property type="match status" value="1"/>
</dbReference>
<dbReference type="FunFam" id="3.40.50.360:FF:000023">
    <property type="entry name" value="NADPH--cytochrome P450 reductase"/>
    <property type="match status" value="1"/>
</dbReference>
<dbReference type="FunFam" id="3.40.50.80:FF:000001">
    <property type="entry name" value="NADPH--cytochrome P450 reductase 1"/>
    <property type="match status" value="1"/>
</dbReference>
<dbReference type="Gene3D" id="3.40.50.360">
    <property type="match status" value="1"/>
</dbReference>
<dbReference type="Gene3D" id="1.20.990.10">
    <property type="entry name" value="NADPH-cytochrome p450 Reductase, Chain A, domain 3"/>
    <property type="match status" value="1"/>
</dbReference>
<dbReference type="Gene3D" id="3.40.50.80">
    <property type="entry name" value="Nucleotide-binding domain of ferredoxin-NADP reductase (FNR) module"/>
    <property type="match status" value="1"/>
</dbReference>
<dbReference type="Gene3D" id="2.40.30.10">
    <property type="entry name" value="Translation factors"/>
    <property type="match status" value="1"/>
</dbReference>
<dbReference type="HAMAP" id="MF_03212">
    <property type="entry name" value="NCPR"/>
    <property type="match status" value="1"/>
</dbReference>
<dbReference type="InterPro" id="IPR003097">
    <property type="entry name" value="CysJ-like_FAD-binding"/>
</dbReference>
<dbReference type="InterPro" id="IPR017927">
    <property type="entry name" value="FAD-bd_FR_type"/>
</dbReference>
<dbReference type="InterPro" id="IPR001094">
    <property type="entry name" value="Flavdoxin-like"/>
</dbReference>
<dbReference type="InterPro" id="IPR008254">
    <property type="entry name" value="Flavodoxin/NO_synth"/>
</dbReference>
<dbReference type="InterPro" id="IPR001709">
    <property type="entry name" value="Flavoprot_Pyr_Nucl_cyt_Rdtase"/>
</dbReference>
<dbReference type="InterPro" id="IPR029039">
    <property type="entry name" value="Flavoprotein-like_sf"/>
</dbReference>
<dbReference type="InterPro" id="IPR039261">
    <property type="entry name" value="FNR_nucleotide-bd"/>
</dbReference>
<dbReference type="InterPro" id="IPR023173">
    <property type="entry name" value="NADPH_Cyt_P450_Rdtase_alpha"/>
</dbReference>
<dbReference type="InterPro" id="IPR001433">
    <property type="entry name" value="OxRdtase_FAD/NAD-bd"/>
</dbReference>
<dbReference type="InterPro" id="IPR023208">
    <property type="entry name" value="P450R"/>
</dbReference>
<dbReference type="InterPro" id="IPR017938">
    <property type="entry name" value="Riboflavin_synthase-like_b-brl"/>
</dbReference>
<dbReference type="PANTHER" id="PTHR19384:SF17">
    <property type="entry name" value="NADPH--CYTOCHROME P450 REDUCTASE"/>
    <property type="match status" value="1"/>
</dbReference>
<dbReference type="PANTHER" id="PTHR19384">
    <property type="entry name" value="NITRIC OXIDE SYNTHASE-RELATED"/>
    <property type="match status" value="1"/>
</dbReference>
<dbReference type="Pfam" id="PF00667">
    <property type="entry name" value="FAD_binding_1"/>
    <property type="match status" value="1"/>
</dbReference>
<dbReference type="Pfam" id="PF00258">
    <property type="entry name" value="Flavodoxin_1"/>
    <property type="match status" value="1"/>
</dbReference>
<dbReference type="Pfam" id="PF00175">
    <property type="entry name" value="NAD_binding_1"/>
    <property type="match status" value="1"/>
</dbReference>
<dbReference type="PIRSF" id="PIRSF000208">
    <property type="entry name" value="P450R"/>
    <property type="match status" value="1"/>
</dbReference>
<dbReference type="PRINTS" id="PR00369">
    <property type="entry name" value="FLAVODOXIN"/>
</dbReference>
<dbReference type="PRINTS" id="PR00371">
    <property type="entry name" value="FPNCR"/>
</dbReference>
<dbReference type="SUPFAM" id="SSF52343">
    <property type="entry name" value="Ferredoxin reductase-like, C-terminal NADP-linked domain"/>
    <property type="match status" value="1"/>
</dbReference>
<dbReference type="SUPFAM" id="SSF52218">
    <property type="entry name" value="Flavoproteins"/>
    <property type="match status" value="1"/>
</dbReference>
<dbReference type="SUPFAM" id="SSF63380">
    <property type="entry name" value="Riboflavin synthase domain-like"/>
    <property type="match status" value="1"/>
</dbReference>
<dbReference type="PROSITE" id="PS51384">
    <property type="entry name" value="FAD_FR"/>
    <property type="match status" value="1"/>
</dbReference>
<dbReference type="PROSITE" id="PS50902">
    <property type="entry name" value="FLAVODOXIN_LIKE"/>
    <property type="match status" value="1"/>
</dbReference>
<organism>
    <name type="scientific">Catharanthus roseus</name>
    <name type="common">Madagascar periwinkle</name>
    <name type="synonym">Vinca rosea</name>
    <dbReference type="NCBI Taxonomy" id="4058"/>
    <lineage>
        <taxon>Eukaryota</taxon>
        <taxon>Viridiplantae</taxon>
        <taxon>Streptophyta</taxon>
        <taxon>Embryophyta</taxon>
        <taxon>Tracheophyta</taxon>
        <taxon>Spermatophyta</taxon>
        <taxon>Magnoliopsida</taxon>
        <taxon>eudicotyledons</taxon>
        <taxon>Gunneridae</taxon>
        <taxon>Pentapetalae</taxon>
        <taxon>asterids</taxon>
        <taxon>lamiids</taxon>
        <taxon>Gentianales</taxon>
        <taxon>Apocynaceae</taxon>
        <taxon>Rauvolfioideae</taxon>
        <taxon>Vinceae</taxon>
        <taxon>Catharanthinae</taxon>
        <taxon>Catharanthus</taxon>
    </lineage>
</organism>
<feature type="chain" id="PRO_0000167610" description="NADPH--cytochrome P450 reductase">
    <location>
        <begin position="1"/>
        <end position="714"/>
    </location>
</feature>
<feature type="topological domain" description="Lumenal" evidence="1">
    <location>
        <begin position="1"/>
        <end position="48"/>
    </location>
</feature>
<feature type="transmembrane region" description="Helical" evidence="1">
    <location>
        <begin position="49"/>
        <end position="69"/>
    </location>
</feature>
<feature type="topological domain" description="Cytoplasmic" evidence="1">
    <location>
        <begin position="70"/>
        <end position="714"/>
    </location>
</feature>
<feature type="domain" description="Flavodoxin-like" evidence="1">
    <location>
        <begin position="104"/>
        <end position="254"/>
    </location>
</feature>
<feature type="domain" description="FAD-binding FR-type" evidence="1">
    <location>
        <begin position="312"/>
        <end position="559"/>
    </location>
</feature>
<feature type="binding site" evidence="1">
    <location>
        <begin position="110"/>
        <end position="115"/>
    </location>
    <ligand>
        <name>FMN</name>
        <dbReference type="ChEBI" id="CHEBI:58210"/>
    </ligand>
</feature>
<feature type="binding site" evidence="1">
    <location>
        <begin position="165"/>
        <end position="168"/>
    </location>
    <ligand>
        <name>FMN</name>
        <dbReference type="ChEBI" id="CHEBI:58210"/>
    </ligand>
</feature>
<feature type="binding site" evidence="1">
    <location>
        <begin position="203"/>
        <end position="212"/>
    </location>
    <ligand>
        <name>FMN</name>
        <dbReference type="ChEBI" id="CHEBI:58210"/>
    </ligand>
</feature>
<feature type="binding site" evidence="1">
    <location>
        <position position="238"/>
    </location>
    <ligand>
        <name>FMN</name>
        <dbReference type="ChEBI" id="CHEBI:58210"/>
    </ligand>
</feature>
<feature type="binding site" evidence="1">
    <location>
        <position position="332"/>
    </location>
    <ligand>
        <name>NADP(+)</name>
        <dbReference type="ChEBI" id="CHEBI:58349"/>
    </ligand>
</feature>
<feature type="binding site" evidence="1">
    <location>
        <begin position="492"/>
        <end position="495"/>
    </location>
    <ligand>
        <name>FAD</name>
        <dbReference type="ChEBI" id="CHEBI:57692"/>
    </ligand>
</feature>
<feature type="binding site" evidence="1">
    <location>
        <begin position="510"/>
        <end position="512"/>
    </location>
    <ligand>
        <name>FAD</name>
        <dbReference type="ChEBI" id="CHEBI:57692"/>
    </ligand>
</feature>
<feature type="binding site" evidence="1">
    <location>
        <begin position="526"/>
        <end position="529"/>
    </location>
    <ligand>
        <name>FAD</name>
        <dbReference type="ChEBI" id="CHEBI:57692"/>
    </ligand>
</feature>
<feature type="binding site" evidence="1">
    <location>
        <position position="573"/>
    </location>
    <ligand>
        <name>NADP(+)</name>
        <dbReference type="ChEBI" id="CHEBI:58349"/>
    </ligand>
</feature>
<feature type="binding site" evidence="1">
    <location>
        <begin position="634"/>
        <end position="635"/>
    </location>
    <ligand>
        <name>NADP(+)</name>
        <dbReference type="ChEBI" id="CHEBI:58349"/>
    </ligand>
</feature>
<feature type="binding site" evidence="1">
    <location>
        <begin position="640"/>
        <end position="644"/>
    </location>
    <ligand>
        <name>NADP(+)</name>
        <dbReference type="ChEBI" id="CHEBI:58349"/>
    </ligand>
</feature>
<feature type="binding site" evidence="1">
    <location>
        <position position="676"/>
    </location>
    <ligand>
        <name>NADP(+)</name>
        <dbReference type="ChEBI" id="CHEBI:58349"/>
    </ligand>
</feature>
<feature type="binding site" evidence="1">
    <location>
        <position position="714"/>
    </location>
    <ligand>
        <name>FAD</name>
        <dbReference type="ChEBI" id="CHEBI:57692"/>
    </ligand>
</feature>
<proteinExistence type="evidence at transcript level"/>
<comment type="function">
    <text evidence="1">This enzyme is required for electron transfer from NADP to cytochrome P450 in microsomes. It can also provide electron transfer to heme oxygenase and cytochrome B5.</text>
</comment>
<comment type="catalytic activity">
    <reaction evidence="1">
        <text>2 oxidized [cytochrome P450] + NADPH = 2 reduced [cytochrome P450] + NADP(+) + H(+)</text>
        <dbReference type="Rhea" id="RHEA:24040"/>
        <dbReference type="Rhea" id="RHEA-COMP:14627"/>
        <dbReference type="Rhea" id="RHEA-COMP:14628"/>
        <dbReference type="ChEBI" id="CHEBI:15378"/>
        <dbReference type="ChEBI" id="CHEBI:55376"/>
        <dbReference type="ChEBI" id="CHEBI:57783"/>
        <dbReference type="ChEBI" id="CHEBI:58349"/>
        <dbReference type="ChEBI" id="CHEBI:60344"/>
        <dbReference type="EC" id="1.6.2.4"/>
    </reaction>
</comment>
<comment type="cofactor">
    <cofactor evidence="1">
        <name>FAD</name>
        <dbReference type="ChEBI" id="CHEBI:57692"/>
    </cofactor>
    <text evidence="1">Binds 1 FAD per monomer.</text>
</comment>
<comment type="cofactor">
    <cofactor evidence="1">
        <name>FMN</name>
        <dbReference type="ChEBI" id="CHEBI:58210"/>
    </cofactor>
    <text evidence="1">Binds 1 FMN per monomer.</text>
</comment>
<comment type="subcellular location">
    <subcellularLocation>
        <location evidence="1">Endoplasmic reticulum membrane</location>
        <topology evidence="1">Single-pass membrane protein</topology>
        <orientation evidence="1">Cytoplasmic side</orientation>
    </subcellularLocation>
</comment>
<comment type="similarity">
    <text evidence="1">Belongs to the NADPH--cytochrome P450 reductase family.</text>
</comment>
<comment type="similarity">
    <text evidence="1">In the N-terminal section; belongs to the flavodoxin family.</text>
</comment>
<comment type="similarity">
    <text evidence="1">In the C-terminal section; belongs to the flavoprotein pyridine nucleotide cytochrome reductase family.</text>
</comment>
<accession>Q05001</accession>
<evidence type="ECO:0000255" key="1">
    <source>
        <dbReference type="HAMAP-Rule" id="MF_03212"/>
    </source>
</evidence>